<accession>P11194</accession>
<accession>Q70UN4</accession>
<sequence>MASLIYRQLLTNSYSVDLHDEIEQIGSEKTQNVTINPGPFAQTRYAPVNWGHGEINDSTTLEPILDGPYQPTTFTPPNDYWILINSNTNGVVYESTNNSDFWTAVVAIEPHVNPVDRQYTIFGESKQFNVSNNTNKWKFFEMFISSSQNEFYNRRTLTSDTRLVGILKYGGRVWTFHGETPRATTDSSSTANLNNISITIHSEFYIIPRSQESKCNEYINNGLPPIQNTRNVVPLPLSSRSIQYKRAQVNEDIIVSKTSLWKEMQYYRDIIIRFKFGNSIVKVGGLGYKWSEISYKAANYQYNYLRDGEQVTAHTTCSVNGVNNFSYNGGSLPTDFGISRYEVIKENSYVYVDYWDDSKAFRNMVYVRSLAANLNSVKCTGGSYDFSIPVGAWPVMNGGAVSLHFDGVTLSTQFTDFVSLNSLRFRLSLTVDEPSFSIMRTRIVNLFGFPAANPNNGNEYYEISGRFSLISLVPTNDDYQTPIMNSVTVRQDLERQLTDLREEFNSLSQEIAMAQLIDLALLPSDMFSMFSGIKSTIDLTKSMATSVMKKFRKSKLATSISEMTNSLSDAASSASRNVSIRSNLSAISNWTNVSNDVSNVADSLNDVSTQTSTISKKLRLKEMITQTEGMSFDDISAAVLKTKIDMSTQIGKNTLPDIVTEASEKFIPKRSYRILKDDEVMEINTEGKFFAYKINTFDEVPFDVNKFAELVTDSPVISAIIDFKTLKNLNDNYGITRTEAFNLIKSNPTMLRNFINQNHPIIRNRIEQLILQCRL</sequence>
<feature type="chain" id="PRO_0000041087" description="Outer capsid protein VP4" evidence="1">
    <location>
        <begin position="1"/>
        <end position="775"/>
    </location>
</feature>
<feature type="chain" id="PRO_0000041088" description="Outer capsid protein VP8*" evidence="1">
    <location>
        <begin position="1"/>
        <end position="230"/>
    </location>
</feature>
<feature type="chain" id="PRO_0000041089" description="Outer capsid protein VP5*" evidence="1">
    <location>
        <begin position="247"/>
        <end position="775"/>
    </location>
</feature>
<feature type="region of interest" description="Spike head" evidence="1">
    <location>
        <begin position="65"/>
        <end position="223"/>
    </location>
</feature>
<feature type="region of interest" description="Spike body and stalk (antigen domain)" evidence="1">
    <location>
        <begin position="247"/>
        <end position="478"/>
    </location>
</feature>
<feature type="region of interest" description="Hydrophobic; possible role in virus entry into host cell" evidence="1">
    <location>
        <begin position="388"/>
        <end position="408"/>
    </location>
</feature>
<feature type="region of interest" description="Spike foot" evidence="1">
    <location>
        <begin position="509"/>
        <end position="775"/>
    </location>
</feature>
<feature type="coiled-coil region" evidence="1">
    <location>
        <begin position="483"/>
        <end position="517"/>
    </location>
</feature>
<feature type="short sequence motif" description="DGE motif; interaction with ITGA2/ITGB1 heterodimer" evidence="1">
    <location>
        <begin position="307"/>
        <end position="309"/>
    </location>
</feature>
<feature type="short sequence motif" description="KID motif; interaction with HSPA8" evidence="1">
    <location>
        <begin position="643"/>
        <end position="645"/>
    </location>
</feature>
<feature type="site" description="Cleavage" evidence="1">
    <location>
        <begin position="230"/>
        <end position="231"/>
    </location>
</feature>
<feature type="site" description="Cleavage" evidence="1">
    <location>
        <begin position="240"/>
        <end position="241"/>
    </location>
</feature>
<feature type="site" description="Cleavage; associated with enhancement of infectivity" evidence="1">
    <location>
        <begin position="246"/>
        <end position="247"/>
    </location>
</feature>
<feature type="disulfide bond" evidence="1">
    <location>
        <begin position="317"/>
        <end position="379"/>
    </location>
</feature>
<keyword id="KW-0167">Capsid protein</keyword>
<keyword id="KW-0175">Coiled coil</keyword>
<keyword id="KW-1015">Disulfide bond</keyword>
<keyword id="KW-0348">Hemagglutinin</keyword>
<keyword id="KW-1032">Host cell membrane</keyword>
<keyword id="KW-1035">Host cytoplasm</keyword>
<keyword id="KW-1037">Host cytoskeleton</keyword>
<keyword id="KW-1038">Host endoplasmic reticulum</keyword>
<keyword id="KW-1043">Host membrane</keyword>
<keyword id="KW-0945">Host-virus interaction</keyword>
<keyword id="KW-0472">Membrane</keyword>
<keyword id="KW-1152">Outer capsid protein</keyword>
<keyword id="KW-1161">Viral attachment to host cell</keyword>
<keyword id="KW-1162">Viral penetration into host cytoplasm</keyword>
<keyword id="KW-1173">Viral penetration via permeabilization of host membrane</keyword>
<keyword id="KW-0946">Virion</keyword>
<keyword id="KW-1160">Virus entry into host cell</keyword>
<protein>
    <recommendedName>
        <fullName evidence="1">Outer capsid protein VP4</fullName>
    </recommendedName>
    <alternativeName>
        <fullName evidence="1">Hemagglutinin</fullName>
    </alternativeName>
    <component>
        <recommendedName>
            <fullName evidence="1">Outer capsid protein VP8*</fullName>
        </recommendedName>
    </component>
    <component>
        <recommendedName>
            <fullName evidence="1">Outer capsid protein VP5*</fullName>
        </recommendedName>
    </component>
</protein>
<organismHost>
    <name type="scientific">Homo sapiens</name>
    <name type="common">Human</name>
    <dbReference type="NCBI Taxonomy" id="9606"/>
</organismHost>
<name>VP4_ROTHV</name>
<comment type="function">
    <molecule>Outer capsid protein VP4</molecule>
    <text evidence="1">Spike-forming protein that mediates virion attachment to the host epithelial cell receptors and plays a major role in cell penetration, determination of host range restriction and virulence. Rotavirus attachment and entry into the host cell probably involves multiple sequential contacts between the outer capsid proteins VP4 and VP7, and the cell receptors. It is subsequently lost, together with VP7, following virus entry into the host cell. Following entry into the host cell, low intracellular or intravesicular Ca(2+) concentration probably causes the calcium-stabilized VP7 trimers to dissociate from the virion. This step is probably necessary for the membrane-disrupting entry step and the release of VP4, which is locked onto the virion by VP7. During the virus exit from the host cell, VP4 seems to be required to target the newly formed virions to the host cell lipid rafts.</text>
</comment>
<comment type="function">
    <molecule>Outer capsid protein VP5*</molecule>
    <text evidence="1">Forms the spike 'foot' and 'body' and acts as a membrane permeabilization protein that mediates release of viral particles from endosomal compartments into the cytoplasm. During entry, the part of VP5* that protrudes from the virus folds back on itself and reorganizes from a local dimer to a trimer. This reorganization may be linked to membrane penetration by exposing VP5* hydrophobic region. In integrin-dependent strains, VP5* targets the integrin heterodimer ITGA2/ITGB1 for cell attachment.</text>
</comment>
<comment type="function">
    <molecule>Outer capsid protein VP8*</molecule>
    <text evidence="1">Forms the head of the spikes and mediates the recognition of specific host cell surface glycans. It is the viral hemagglutinin and an important target of neutralizing antibodies. In sialic acid-dependent strains, VP8* binds to host cell sialic acid, most probably a ganglioside, providing the initial contact. In some other strains, VP8* mediates the attachment to histo-blood group antigens (HBGAs) for viral entry.</text>
</comment>
<comment type="subunit">
    <molecule>Outer capsid protein VP4</molecule>
    <text evidence="1">Homotrimer. VP4 adopts a dimeric appearance above the capsid surface, while forming a trimeric base anchored inside the capsid layer. Only hints of the third molecule are observed above the capsid surface. It probably performs a series of molecular rearrangements during viral entry. Prior to trypsin cleavage, it is flexible. The priming trypsin cleavage triggers its rearrangement into rigid spikes with approximate two-fold symmetry of their protruding parts. After an unknown second triggering event, cleaved VP4 may undergo another rearrangement, in which two VP5* subunits fold back on themselves and join a third subunit to form a tightly associated trimer, shaped like a folded umbrella. Interacts with VP6. Interacts with VP7.</text>
</comment>
<comment type="subunit">
    <molecule>Outer capsid protein VP5*</molecule>
    <text evidence="1">Homotrimer. The trimer is coiled-coil stabilized by its C-terminus, however, its N-terminus, known as antigen domain or 'body', seems to be flexible allowing it to self-associate either as a dimer or a trimer.</text>
</comment>
<comment type="subcellular location">
    <molecule>Outer capsid protein VP4</molecule>
    <subcellularLocation>
        <location evidence="1">Virion</location>
    </subcellularLocation>
    <subcellularLocation>
        <location evidence="1">Host rough endoplasmic reticulum</location>
    </subcellularLocation>
    <subcellularLocation>
        <location evidence="1">Host cell membrane</location>
    </subcellularLocation>
    <subcellularLocation>
        <location evidence="1">Host cytoplasm</location>
        <location evidence="1">Host cytoskeleton</location>
    </subcellularLocation>
    <subcellularLocation>
        <location evidence="1">Host endoplasmic reticulum-Golgi intermediate compartment</location>
    </subcellularLocation>
    <text evidence="1">The outer layer contains 180 copies of VP4, grouped as 60 dimers. Immature double-layered particles assembled in the cytoplasm bud across the membrane of the endoplasmic reticulum, acquiring during this process a transient lipid membrane that is modified with the ER resident viral glycoproteins NSP4 and VP7; these enveloped particles also contain VP4. As the particles move towards the interior of the ER cisternae, the transient lipid membrane and the non-structural protein NSP4 are lost, while the virus surface proteins VP4 and VP7 rearrange to form the outermost virus protein layer, yielding mature infectious triple-layered particles. VP4 also seems to associate with lipid rafts of the host cell membrane probably for the exit of the virus from the infected cell by an alternate pathway.</text>
</comment>
<comment type="subcellular location">
    <molecule>Outer capsid protein VP8*</molecule>
    <subcellularLocation>
        <location evidence="1">Virion</location>
    </subcellularLocation>
    <text evidence="1">Outer capsid protein.</text>
</comment>
<comment type="subcellular location">
    <molecule>Outer capsid protein VP5*</molecule>
    <subcellularLocation>
        <location evidence="1">Virion</location>
    </subcellularLocation>
    <text evidence="1">Outer capsid protein.</text>
</comment>
<comment type="domain">
    <molecule>Outer capsid protein VP4</molecule>
    <text evidence="1">The VP4 spike is divided into a foot, a stalk and body, and a head.</text>
</comment>
<comment type="PTM">
    <molecule>Outer capsid protein VP4</molecule>
    <text evidence="1">Proteolytic cleavage by trypsin results in activation of VP4 functions and greatly increases infectivity. The penetration into the host cell is dependent on trypsin treatment of VP4. It produces two peptides, VP5* and VP8* that remain associated with the virion. Cleavage of VP4 by trypsin probably occurs in vivo in the lumen of the intestine prior to infection of enterocytes. Trypsin seems to be incorporated into the three-layered viral particles but remains inactive as long as the viral outer capsid is intact and would only be activated upon the solubilization of the latter.</text>
</comment>
<comment type="miscellaneous">
    <text evidence="2">This strain probably does not use sialic acid to attach to the host cell.</text>
</comment>
<comment type="miscellaneous">
    <text evidence="1">In group A rotaviruses, VP4 defines the P serotype.</text>
</comment>
<comment type="miscellaneous">
    <text evidence="1">Some rotavirus strains are neuraminidase-sensitive and require sialic acid to attach to the cell surface. Some rotavirus strains are integrin-dependent. Some rotavirus strains depend on ganglioside for their entry into the host cell. Hsp70 also seems to be involved in the entry of some strains.</text>
</comment>
<comment type="similarity">
    <text evidence="1">Belongs to the rotavirus VP4 family.</text>
</comment>
<proteinExistence type="inferred from homology"/>
<evidence type="ECO:0000255" key="1">
    <source>
        <dbReference type="HAMAP-Rule" id="MF_04132"/>
    </source>
</evidence>
<evidence type="ECO:0000303" key="2">
    <source>
    </source>
</evidence>
<reference key="1">
    <citation type="journal article" date="1988" name="J. Virol.">
        <title>Sequence of the fourth gene of human rotaviruses recovered from asymptomatic or symptomatic infections.</title>
        <authorList>
            <person name="Gorziglia M."/>
            <person name="Green K.Y."/>
            <person name="Nishikawa K."/>
            <person name="Taniguchi K."/>
            <person name="Jones R.W."/>
            <person name="Kapikian A.Z."/>
            <person name="Chanock R.M."/>
        </authorList>
    </citation>
    <scope>NUCLEOTIDE SEQUENCE [GENOMIC RNA]</scope>
</reference>
<reference key="2">
    <citation type="submission" date="2003-01" db="EMBL/GenBank/DDBJ databases">
        <authorList>
            <person name="Gentsch J.R."/>
        </authorList>
    </citation>
    <scope>NUCLEOTIDE SEQUENCE [GENOMIC RNA]</scope>
</reference>
<reference key="3">
    <citation type="journal article" date="1986" name="Proc. Natl. Acad. Sci. U.S.A.">
        <title>Conservation of amino acid sequence of VP8 and cleavage region of 84-kDa outer capsid protein among rotaviruses recovered from asymptomatic neonatal infection.</title>
        <authorList>
            <person name="Gorziglia M."/>
            <person name="Hoshino Y."/>
            <person name="Buckler-White A."/>
            <person name="Blumentals I."/>
            <person name="Glass R."/>
            <person name="Flores J."/>
            <person name="Kapikian A.Z."/>
            <person name="Chanock R.M."/>
        </authorList>
    </citation>
    <scope>NUCLEOTIDE SEQUENCE [GENOMIC RNA] OF 1-280</scope>
</reference>
<reference key="4">
    <citation type="journal article" date="2006" name="Glycoconj. J.">
        <title>Role of sialic acids in rotavirus infection.</title>
        <authorList>
            <person name="Isa P."/>
            <person name="Arias C.F."/>
            <person name="Lopez S."/>
        </authorList>
    </citation>
    <scope>REVIEW</scope>
</reference>
<dbReference type="EMBL" id="AJ540229">
    <property type="protein sequence ID" value="CAD62682.1"/>
    <property type="molecule type" value="Genomic_RNA"/>
</dbReference>
<dbReference type="PIR" id="D28839">
    <property type="entry name" value="VPXRW6"/>
</dbReference>
<dbReference type="SMR" id="P11194"/>
<dbReference type="GO" id="GO:0044172">
    <property type="term" value="C:host cell endoplasmic reticulum-Golgi intermediate compartment"/>
    <property type="evidence" value="ECO:0007669"/>
    <property type="project" value="UniProtKB-SubCell"/>
</dbReference>
<dbReference type="GO" id="GO:0020002">
    <property type="term" value="C:host cell plasma membrane"/>
    <property type="evidence" value="ECO:0007669"/>
    <property type="project" value="UniProtKB-SubCell"/>
</dbReference>
<dbReference type="GO" id="GO:0044168">
    <property type="term" value="C:host cell rough endoplasmic reticulum"/>
    <property type="evidence" value="ECO:0007669"/>
    <property type="project" value="UniProtKB-SubCell"/>
</dbReference>
<dbReference type="GO" id="GO:0044163">
    <property type="term" value="C:host cytoskeleton"/>
    <property type="evidence" value="ECO:0007669"/>
    <property type="project" value="UniProtKB-SubCell"/>
</dbReference>
<dbReference type="GO" id="GO:0016020">
    <property type="term" value="C:membrane"/>
    <property type="evidence" value="ECO:0007669"/>
    <property type="project" value="UniProtKB-KW"/>
</dbReference>
<dbReference type="GO" id="GO:0039624">
    <property type="term" value="C:viral outer capsid"/>
    <property type="evidence" value="ECO:0007669"/>
    <property type="project" value="UniProtKB-UniRule"/>
</dbReference>
<dbReference type="GO" id="GO:0039665">
    <property type="term" value="P:permeabilization of host organelle membrane involved in viral entry into host cell"/>
    <property type="evidence" value="ECO:0007669"/>
    <property type="project" value="UniProtKB-UniRule"/>
</dbReference>
<dbReference type="GO" id="GO:0019062">
    <property type="term" value="P:virion attachment to host cell"/>
    <property type="evidence" value="ECO:0007669"/>
    <property type="project" value="UniProtKB-UniRule"/>
</dbReference>
<dbReference type="FunFam" id="2.60.120.200:FF:000303">
    <property type="entry name" value="Outer capsid protein VP4"/>
    <property type="match status" value="1"/>
</dbReference>
<dbReference type="Gene3D" id="1.20.5.170">
    <property type="match status" value="1"/>
</dbReference>
<dbReference type="Gene3D" id="2.60.120.200">
    <property type="match status" value="1"/>
</dbReference>
<dbReference type="HAMAP" id="MF_04132">
    <property type="entry name" value="Rota_A_VP4"/>
    <property type="match status" value="1"/>
</dbReference>
<dbReference type="HAMAP" id="MF_04125">
    <property type="entry name" value="Rota_VP4"/>
    <property type="match status" value="1"/>
</dbReference>
<dbReference type="InterPro" id="IPR013320">
    <property type="entry name" value="ConA-like_dom_sf"/>
</dbReference>
<dbReference type="InterPro" id="IPR042546">
    <property type="entry name" value="Rota_A_VP4"/>
</dbReference>
<dbReference type="InterPro" id="IPR035330">
    <property type="entry name" value="Rota_VP4_MID"/>
</dbReference>
<dbReference type="InterPro" id="IPR038017">
    <property type="entry name" value="Rota_VP4_MID_sf"/>
</dbReference>
<dbReference type="InterPro" id="IPR000416">
    <property type="entry name" value="VP4_concanavalin-like"/>
</dbReference>
<dbReference type="InterPro" id="IPR035329">
    <property type="entry name" value="VP4_helical"/>
</dbReference>
<dbReference type="Pfam" id="PF17477">
    <property type="entry name" value="Rota_VP4_MID"/>
    <property type="match status" value="1"/>
</dbReference>
<dbReference type="Pfam" id="PF00426">
    <property type="entry name" value="VP4_haemagglut"/>
    <property type="match status" value="1"/>
</dbReference>
<dbReference type="Pfam" id="PF17478">
    <property type="entry name" value="VP4_helical"/>
    <property type="match status" value="1"/>
</dbReference>
<dbReference type="SUPFAM" id="SSF49899">
    <property type="entry name" value="Concanavalin A-like lectins/glucanases"/>
    <property type="match status" value="1"/>
</dbReference>
<dbReference type="SUPFAM" id="SSF111379">
    <property type="entry name" value="VP4 membrane interaction domain"/>
    <property type="match status" value="1"/>
</dbReference>
<organism>
    <name type="scientific">Rotavirus A (isolate RVA/Human/Italy/VA70/1975/G4P1A[8])</name>
    <name type="common">RV-A</name>
    <dbReference type="NCBI Taxonomy" id="10961"/>
    <lineage>
        <taxon>Viruses</taxon>
        <taxon>Riboviria</taxon>
        <taxon>Orthornavirae</taxon>
        <taxon>Duplornaviricota</taxon>
        <taxon>Resentoviricetes</taxon>
        <taxon>Reovirales</taxon>
        <taxon>Sedoreoviridae</taxon>
        <taxon>Rotavirus</taxon>
        <taxon>Rotavirus A</taxon>
    </lineage>
</organism>